<evidence type="ECO:0000255" key="1"/>
<evidence type="ECO:0000256" key="2">
    <source>
        <dbReference type="SAM" id="MobiDB-lite"/>
    </source>
</evidence>
<evidence type="ECO:0000269" key="3">
    <source>
    </source>
</evidence>
<evidence type="ECO:0000305" key="4"/>
<reference key="1">
    <citation type="journal article" date="1988" name="Mol. Microbiol.">
        <title>Three copies of a single protein II-encoding sequence in the genome of Neisseria gonorrhoeae JS3: evidence for gene conversion and gene duplication.</title>
        <authorList>
            <person name="van der Ley P."/>
        </authorList>
    </citation>
    <scope>NUCLEOTIDE SEQUENCE [GENOMIC DNA]</scope>
    <source>
        <strain>JS3</strain>
    </source>
</reference>
<reference key="2">
    <citation type="journal article" date="1987" name="Infect. Immun.">
        <title>Antigenic and structural differences among six proteins II expressed by a single strain of Neisseria gonorrhoeae.</title>
        <authorList>
            <person name="Barritt D.S."/>
            <person name="Schwalbe R.S."/>
            <person name="Klapper D.G."/>
            <person name="Cannon J.G."/>
        </authorList>
    </citation>
    <scope>PROTEIN SEQUENCE OF 26-45</scope>
</reference>
<gene>
    <name type="primary">piiC</name>
</gene>
<dbReference type="EMBL" id="X12625">
    <property type="protein sequence ID" value="CAA31144.1"/>
    <property type="molecule type" value="Genomic_DNA"/>
</dbReference>
<dbReference type="PIR" id="S03095">
    <property type="entry name" value="KONH2C"/>
</dbReference>
<dbReference type="SMR" id="P09888"/>
<dbReference type="Reactome" id="R-HSA-202733">
    <property type="pathway name" value="Cell surface interactions at the vascular wall"/>
</dbReference>
<dbReference type="GO" id="GO:0009279">
    <property type="term" value="C:cell outer membrane"/>
    <property type="evidence" value="ECO:0000304"/>
    <property type="project" value="Reactome"/>
</dbReference>
<dbReference type="GO" id="GO:0046930">
    <property type="term" value="C:pore complex"/>
    <property type="evidence" value="ECO:0007669"/>
    <property type="project" value="UniProtKB-KW"/>
</dbReference>
<dbReference type="GO" id="GO:0015288">
    <property type="term" value="F:porin activity"/>
    <property type="evidence" value="ECO:0007669"/>
    <property type="project" value="UniProtKB-KW"/>
</dbReference>
<dbReference type="GO" id="GO:0006811">
    <property type="term" value="P:monoatomic ion transport"/>
    <property type="evidence" value="ECO:0007669"/>
    <property type="project" value="UniProtKB-KW"/>
</dbReference>
<dbReference type="FunFam" id="2.40.160.20:FF:000005">
    <property type="entry name" value="Opacity protein opA54"/>
    <property type="match status" value="1"/>
</dbReference>
<dbReference type="Gene3D" id="2.40.160.20">
    <property type="match status" value="1"/>
</dbReference>
<dbReference type="InterPro" id="IPR011250">
    <property type="entry name" value="OMP/PagP_b-brl"/>
</dbReference>
<dbReference type="InterPro" id="IPR016373">
    <property type="entry name" value="Opacity"/>
</dbReference>
<dbReference type="InterPro" id="IPR003394">
    <property type="entry name" value="Porin_opacity"/>
</dbReference>
<dbReference type="Pfam" id="PF02462">
    <property type="entry name" value="Opacity"/>
    <property type="match status" value="1"/>
</dbReference>
<dbReference type="PIRSF" id="PIRSF002984">
    <property type="entry name" value="Opacity"/>
    <property type="match status" value="1"/>
</dbReference>
<dbReference type="SUPFAM" id="SSF56925">
    <property type="entry name" value="OMPA-like"/>
    <property type="match status" value="1"/>
</dbReference>
<accession>P09888</accession>
<feature type="signal peptide" evidence="3">
    <location>
        <begin position="1"/>
        <end position="25"/>
    </location>
</feature>
<feature type="chain" id="PRO_0000025197" description="Outer membrane protein P.IIC">
    <location>
        <begin position="26"/>
        <end position="270"/>
    </location>
</feature>
<feature type="topological domain" description="Extracellular" evidence="1">
    <location>
        <begin position="26"/>
        <end position="35"/>
    </location>
</feature>
<feature type="transmembrane region" description="Beta stranded" evidence="1">
    <location>
        <begin position="36"/>
        <end position="44"/>
    </location>
</feature>
<feature type="topological domain" description="Periplasmic" evidence="1">
    <location>
        <begin position="45"/>
        <end position="76"/>
    </location>
</feature>
<feature type="transmembrane region" description="Beta stranded" evidence="1">
    <location>
        <begin position="77"/>
        <end position="85"/>
    </location>
</feature>
<feature type="topological domain" description="Extracellular" evidence="1">
    <location>
        <begin position="86"/>
        <end position="89"/>
    </location>
</feature>
<feature type="transmembrane region" description="Beta stranded" evidence="1">
    <location>
        <begin position="90"/>
        <end position="96"/>
    </location>
</feature>
<feature type="topological domain" description="Periplasmic" evidence="1">
    <location>
        <begin position="97"/>
        <end position="142"/>
    </location>
</feature>
<feature type="transmembrane region" description="Beta stranded" evidence="1">
    <location>
        <begin position="143"/>
        <end position="157"/>
    </location>
</feature>
<feature type="topological domain" description="Extracellular" evidence="1">
    <location>
        <begin position="158"/>
        <end position="162"/>
    </location>
</feature>
<feature type="transmembrane region" description="Beta stranded" evidence="1">
    <location>
        <begin position="163"/>
        <end position="173"/>
    </location>
</feature>
<feature type="topological domain" description="Periplasmic" evidence="1">
    <location>
        <begin position="174"/>
        <end position="221"/>
    </location>
</feature>
<feature type="transmembrane region" description="Beta stranded" evidence="1">
    <location>
        <begin position="222"/>
        <end position="234"/>
    </location>
</feature>
<feature type="topological domain" description="Extracellular" evidence="1">
    <location>
        <begin position="235"/>
        <end position="237"/>
    </location>
</feature>
<feature type="transmembrane region" description="Beta stranded" evidence="1">
    <location>
        <begin position="238"/>
        <end position="246"/>
    </location>
</feature>
<feature type="topological domain" description="Periplasmic" evidence="1">
    <location>
        <begin position="247"/>
        <end position="261"/>
    </location>
</feature>
<feature type="transmembrane region" description="Beta stranded" evidence="1">
    <location>
        <begin position="262"/>
        <end position="270"/>
    </location>
</feature>
<feature type="region of interest" description="Disordered" evidence="2">
    <location>
        <begin position="194"/>
        <end position="217"/>
    </location>
</feature>
<feature type="sequence conflict" description="In Ref. 2; AA sequence." evidence="4" ref="2">
    <original>G</original>
    <variation>N</variation>
    <location>
        <position position="30"/>
    </location>
</feature>
<feature type="sequence conflict" description="In Ref. 2; AA sequence." evidence="4" ref="2">
    <original>L</original>
    <variation>K</variation>
    <location>
        <position position="40"/>
    </location>
</feature>
<feature type="sequence conflict" description="In Ref. 2; AA sequence." evidence="4" ref="2">
    <original>A</original>
    <variation>Y</variation>
    <location>
        <position position="44"/>
    </location>
</feature>
<protein>
    <recommendedName>
        <fullName>Outer membrane protein P.IIC</fullName>
        <shortName>Protein IIC</shortName>
    </recommendedName>
</protein>
<keyword id="KW-0998">Cell outer membrane</keyword>
<keyword id="KW-0903">Direct protein sequencing</keyword>
<keyword id="KW-0406">Ion transport</keyword>
<keyword id="KW-0472">Membrane</keyword>
<keyword id="KW-0626">Porin</keyword>
<keyword id="KW-0732">Signal</keyword>
<keyword id="KW-0812">Transmembrane</keyword>
<keyword id="KW-1134">Transmembrane beta strand</keyword>
<keyword id="KW-0813">Transport</keyword>
<name>OMPC_NEIGO</name>
<sequence>MQPAKNLLFSSLLFSSLLFSSAARAASEDGGRGPYVQADLAYAAERITHDYPKPTGTGKNKISTVSDYFRNIRTHSVHPRVSVGYDFGSWRIAADYARYRKWNNNKYSVSIKELLRNDNSASGVRGHLNIQTQKTEHQENGTFHAVSSLGLSTIYDFDTGSRFKPYIGMRVAYGHVRHQVRSVEQETEIITTYPSNGGGKVSLSSKMPPKSAHHQSNSIRRVGLGVIAGVGFDITPNLTLDTGYRYHNWGRLENTRFKTHEASLGMRYRF</sequence>
<proteinExistence type="evidence at protein level"/>
<organism>
    <name type="scientific">Neisseria gonorrhoeae</name>
    <dbReference type="NCBI Taxonomy" id="485"/>
    <lineage>
        <taxon>Bacteria</taxon>
        <taxon>Pseudomonadati</taxon>
        <taxon>Pseudomonadota</taxon>
        <taxon>Betaproteobacteria</taxon>
        <taxon>Neisseriales</taxon>
        <taxon>Neisseriaceae</taxon>
        <taxon>Neisseria</taxon>
    </lineage>
</organism>
<comment type="function">
    <text>This protein serves as a porin.</text>
</comment>
<comment type="subunit">
    <text>Homotrimer.</text>
</comment>
<comment type="subcellular location">
    <subcellularLocation>
        <location>Cell outer membrane</location>
        <topology>Multi-pass membrane protein</topology>
    </subcellularLocation>
</comment>
<comment type="similarity">
    <text evidence="4">Belongs to the opacity porin family.</text>
</comment>